<accession>C4LF62</accession>
<keyword id="KW-0143">Chaperone</keyword>
<keyword id="KW-0963">Cytoplasm</keyword>
<keyword id="KW-0533">Nickel</keyword>
<keyword id="KW-1185">Reference proteome</keyword>
<organism>
    <name type="scientific">Tolumonas auensis (strain DSM 9187 / NBRC 110442 / TA 4)</name>
    <dbReference type="NCBI Taxonomy" id="595494"/>
    <lineage>
        <taxon>Bacteria</taxon>
        <taxon>Pseudomonadati</taxon>
        <taxon>Pseudomonadota</taxon>
        <taxon>Gammaproteobacteria</taxon>
        <taxon>Aeromonadales</taxon>
        <taxon>Aeromonadaceae</taxon>
        <taxon>Tolumonas</taxon>
    </lineage>
</organism>
<dbReference type="EMBL" id="CP001616">
    <property type="protein sequence ID" value="ACQ93229.1"/>
    <property type="molecule type" value="Genomic_DNA"/>
</dbReference>
<dbReference type="RefSeq" id="WP_015878700.1">
    <property type="nucleotide sequence ID" value="NC_012691.1"/>
</dbReference>
<dbReference type="SMR" id="C4LF62"/>
<dbReference type="STRING" id="595494.Tola_1618"/>
<dbReference type="KEGG" id="tau:Tola_1618"/>
<dbReference type="eggNOG" id="COG2371">
    <property type="taxonomic scope" value="Bacteria"/>
</dbReference>
<dbReference type="HOGENOM" id="CLU_093757_2_0_6"/>
<dbReference type="OrthoDB" id="5421304at2"/>
<dbReference type="Proteomes" id="UP000009073">
    <property type="component" value="Chromosome"/>
</dbReference>
<dbReference type="GO" id="GO:0005737">
    <property type="term" value="C:cytoplasm"/>
    <property type="evidence" value="ECO:0007669"/>
    <property type="project" value="UniProtKB-SubCell"/>
</dbReference>
<dbReference type="GO" id="GO:0016151">
    <property type="term" value="F:nickel cation binding"/>
    <property type="evidence" value="ECO:0007669"/>
    <property type="project" value="UniProtKB-UniRule"/>
</dbReference>
<dbReference type="GO" id="GO:0051082">
    <property type="term" value="F:unfolded protein binding"/>
    <property type="evidence" value="ECO:0007669"/>
    <property type="project" value="UniProtKB-UniRule"/>
</dbReference>
<dbReference type="GO" id="GO:0006457">
    <property type="term" value="P:protein folding"/>
    <property type="evidence" value="ECO:0007669"/>
    <property type="project" value="InterPro"/>
</dbReference>
<dbReference type="GO" id="GO:0065003">
    <property type="term" value="P:protein-containing complex assembly"/>
    <property type="evidence" value="ECO:0007669"/>
    <property type="project" value="InterPro"/>
</dbReference>
<dbReference type="GO" id="GO:0019627">
    <property type="term" value="P:urea metabolic process"/>
    <property type="evidence" value="ECO:0007669"/>
    <property type="project" value="InterPro"/>
</dbReference>
<dbReference type="CDD" id="cd00571">
    <property type="entry name" value="UreE"/>
    <property type="match status" value="1"/>
</dbReference>
<dbReference type="Gene3D" id="2.60.260.20">
    <property type="entry name" value="Urease metallochaperone UreE, N-terminal domain"/>
    <property type="match status" value="1"/>
</dbReference>
<dbReference type="Gene3D" id="3.30.70.790">
    <property type="entry name" value="UreE, C-terminal domain"/>
    <property type="match status" value="1"/>
</dbReference>
<dbReference type="HAMAP" id="MF_00822">
    <property type="entry name" value="UreE"/>
    <property type="match status" value="1"/>
</dbReference>
<dbReference type="InterPro" id="IPR012406">
    <property type="entry name" value="UreE"/>
</dbReference>
<dbReference type="InterPro" id="IPR007864">
    <property type="entry name" value="UreE_C_dom"/>
</dbReference>
<dbReference type="InterPro" id="IPR004029">
    <property type="entry name" value="UreE_N"/>
</dbReference>
<dbReference type="InterPro" id="IPR036118">
    <property type="entry name" value="UreE_N_sf"/>
</dbReference>
<dbReference type="NCBIfam" id="NF009751">
    <property type="entry name" value="PRK13261.1-1"/>
    <property type="match status" value="1"/>
</dbReference>
<dbReference type="Pfam" id="PF05194">
    <property type="entry name" value="UreE_C"/>
    <property type="match status" value="1"/>
</dbReference>
<dbReference type="Pfam" id="PF02814">
    <property type="entry name" value="UreE_N"/>
    <property type="match status" value="1"/>
</dbReference>
<dbReference type="SMART" id="SM00988">
    <property type="entry name" value="UreE_N"/>
    <property type="match status" value="1"/>
</dbReference>
<dbReference type="SUPFAM" id="SSF69737">
    <property type="entry name" value="Urease metallochaperone UreE, C-terminal domain"/>
    <property type="match status" value="1"/>
</dbReference>
<dbReference type="SUPFAM" id="SSF69287">
    <property type="entry name" value="Urease metallochaperone UreE, N-terminal domain"/>
    <property type="match status" value="1"/>
</dbReference>
<proteinExistence type="inferred from homology"/>
<feature type="chain" id="PRO_1000213121" description="Urease accessory protein UreE">
    <location>
        <begin position="1"/>
        <end position="188"/>
    </location>
</feature>
<feature type="region of interest" description="Disordered" evidence="2">
    <location>
        <begin position="142"/>
        <end position="174"/>
    </location>
</feature>
<feature type="compositionally biased region" description="Basic and acidic residues" evidence="2">
    <location>
        <begin position="157"/>
        <end position="172"/>
    </location>
</feature>
<evidence type="ECO:0000255" key="1">
    <source>
        <dbReference type="HAMAP-Rule" id="MF_00822"/>
    </source>
</evidence>
<evidence type="ECO:0000256" key="2">
    <source>
        <dbReference type="SAM" id="MobiDB-lite"/>
    </source>
</evidence>
<protein>
    <recommendedName>
        <fullName evidence="1">Urease accessory protein UreE</fullName>
    </recommendedName>
</protein>
<comment type="function">
    <text evidence="1">Involved in urease metallocenter assembly. Binds nickel. Probably functions as a nickel donor during metallocenter assembly.</text>
</comment>
<comment type="subcellular location">
    <subcellularLocation>
        <location evidence="1">Cytoplasm</location>
    </subcellularLocation>
</comment>
<comment type="similarity">
    <text evidence="1">Belongs to the UreE family.</text>
</comment>
<gene>
    <name evidence="1" type="primary">ureE</name>
    <name type="ordered locus">Tola_1618</name>
</gene>
<sequence>MIRLTQRLTTEESAGKTLFTTLTLPIDLRIKSRLKVTLDNGDAAGLFLTRGQLLRGGECLTDDAGAVVVMVKAAEEQVSTVRCDDLLLLSRICYHLGNRHVPLQIEAGFARYQHDYVLDEMVVGLGGSVVVELAPFEPEAGAYQSQAGAGHHHHHDHDHGHSHDHSHTHSHADSAATAVPMHGFLKTS</sequence>
<reference key="1">
    <citation type="submission" date="2009-05" db="EMBL/GenBank/DDBJ databases">
        <title>Complete sequence of Tolumonas auensis DSM 9187.</title>
        <authorList>
            <consortium name="US DOE Joint Genome Institute"/>
            <person name="Lucas S."/>
            <person name="Copeland A."/>
            <person name="Lapidus A."/>
            <person name="Glavina del Rio T."/>
            <person name="Tice H."/>
            <person name="Bruce D."/>
            <person name="Goodwin L."/>
            <person name="Pitluck S."/>
            <person name="Chertkov O."/>
            <person name="Brettin T."/>
            <person name="Detter J.C."/>
            <person name="Han C."/>
            <person name="Larimer F."/>
            <person name="Land M."/>
            <person name="Hauser L."/>
            <person name="Kyrpides N."/>
            <person name="Mikhailova N."/>
            <person name="Spring S."/>
            <person name="Beller H."/>
        </authorList>
    </citation>
    <scope>NUCLEOTIDE SEQUENCE [LARGE SCALE GENOMIC DNA]</scope>
    <source>
        <strain>DSM 9187 / NBRC 110442 / TA 4</strain>
    </source>
</reference>
<name>UREE_TOLAT</name>